<dbReference type="EMBL" id="CP017625">
    <property type="protein sequence ID" value="AOW28180.1"/>
    <property type="molecule type" value="Genomic_DNA"/>
</dbReference>
<dbReference type="RefSeq" id="XP_721785.2">
    <property type="nucleotide sequence ID" value="XM_716692.2"/>
</dbReference>
<dbReference type="STRING" id="237561.Q5AJK6"/>
<dbReference type="GlyCosmos" id="Q5AJK6">
    <property type="glycosylation" value="2 sites, No reported glycans"/>
</dbReference>
<dbReference type="EnsemblFungi" id="C3_01370C_A-T">
    <property type="protein sequence ID" value="C3_01370C_A-T-p1"/>
    <property type="gene ID" value="C3_01370C_A"/>
</dbReference>
<dbReference type="GeneID" id="3636647"/>
<dbReference type="KEGG" id="cal:CAALFM_C301370CA"/>
<dbReference type="CGD" id="CAL0000176642">
    <property type="gene designation" value="PGA44"/>
</dbReference>
<dbReference type="VEuPathDB" id="FungiDB:C3_01370C_A"/>
<dbReference type="HOGENOM" id="CLU_915257_0_0_1"/>
<dbReference type="InParanoid" id="Q5AJK6"/>
<dbReference type="OrthoDB" id="4018997at2759"/>
<dbReference type="Proteomes" id="UP000000559">
    <property type="component" value="Chromosome 3"/>
</dbReference>
<dbReference type="GO" id="GO:0005886">
    <property type="term" value="C:plasma membrane"/>
    <property type="evidence" value="ECO:0007669"/>
    <property type="project" value="UniProtKB-SubCell"/>
</dbReference>
<dbReference type="GO" id="GO:0098552">
    <property type="term" value="C:side of membrane"/>
    <property type="evidence" value="ECO:0007669"/>
    <property type="project" value="UniProtKB-KW"/>
</dbReference>
<name>PGA44_CANAL</name>
<feature type="signal peptide" evidence="1">
    <location>
        <begin position="1"/>
        <end position="22"/>
    </location>
</feature>
<feature type="chain" id="PRO_0000429946" description="Predicted GPI-anchored protein 44">
    <location>
        <begin position="23"/>
        <end position="286"/>
    </location>
</feature>
<feature type="propeptide" id="PRO_0000429947" description="Removed in mature form" evidence="1">
    <location>
        <begin position="287"/>
        <end position="307"/>
    </location>
</feature>
<feature type="region of interest" description="Disordered" evidence="3">
    <location>
        <begin position="232"/>
        <end position="261"/>
    </location>
</feature>
<feature type="compositionally biased region" description="Polar residues" evidence="3">
    <location>
        <begin position="239"/>
        <end position="254"/>
    </location>
</feature>
<feature type="lipid moiety-binding region" description="GPI-anchor amidated glycine" evidence="1">
    <location>
        <position position="286"/>
    </location>
</feature>
<feature type="glycosylation site" description="N-linked (GlcNAc...) asparagine" evidence="2">
    <location>
        <position position="146"/>
    </location>
</feature>
<feature type="glycosylation site" description="N-linked (GlcNAc...) asparagine" evidence="2">
    <location>
        <position position="217"/>
    </location>
</feature>
<keyword id="KW-1003">Cell membrane</keyword>
<keyword id="KW-0325">Glycoprotein</keyword>
<keyword id="KW-0336">GPI-anchor</keyword>
<keyword id="KW-0449">Lipoprotein</keyword>
<keyword id="KW-0472">Membrane</keyword>
<keyword id="KW-1185">Reference proteome</keyword>
<keyword id="KW-0732">Signal</keyword>
<proteinExistence type="evidence at protein level"/>
<sequence length="307" mass="32317">MLSTNNLLILLIFSFLITNVKSDLGGPCFSMSTMEGFACGLGVHKNIQIITDCLCYIPGYWEQLDGCDKLVRGPHHTPIDGAEICSRASEYAANPAGFTGETDYYESSTTVMHVVMLDFPTYSPGVTNFLDSSSNDLTTTNTDEINSSITTDEVIPSSSSSYIEIPSETLMESSVSTQPSTIETSETSHATSLEVSSIITGVSSEPLTIVSESGGLNSTEIASTPVVITSPTPQPLLETPSQESSAPNIDSTTPTTIDNTVVDGTTTNDATSVASSTSDVAYVYIGGAMGYPSISVALGLVFIAYLV</sequence>
<reference key="1">
    <citation type="journal article" date="2004" name="Proc. Natl. Acad. Sci. U.S.A.">
        <title>The diploid genome sequence of Candida albicans.</title>
        <authorList>
            <person name="Jones T."/>
            <person name="Federspiel N.A."/>
            <person name="Chibana H."/>
            <person name="Dungan J."/>
            <person name="Kalman S."/>
            <person name="Magee B.B."/>
            <person name="Newport G."/>
            <person name="Thorstenson Y.R."/>
            <person name="Agabian N."/>
            <person name="Magee P.T."/>
            <person name="Davis R.W."/>
            <person name="Scherer S."/>
        </authorList>
    </citation>
    <scope>NUCLEOTIDE SEQUENCE [LARGE SCALE GENOMIC DNA]</scope>
    <source>
        <strain>SC5314 / ATCC MYA-2876</strain>
    </source>
</reference>
<reference key="2">
    <citation type="journal article" date="2007" name="Genome Biol.">
        <title>Assembly of the Candida albicans genome into sixteen supercontigs aligned on the eight chromosomes.</title>
        <authorList>
            <person name="van het Hoog M."/>
            <person name="Rast T.J."/>
            <person name="Martchenko M."/>
            <person name="Grindle S."/>
            <person name="Dignard D."/>
            <person name="Hogues H."/>
            <person name="Cuomo C."/>
            <person name="Berriman M."/>
            <person name="Scherer S."/>
            <person name="Magee B.B."/>
            <person name="Whiteway M."/>
            <person name="Chibana H."/>
            <person name="Nantel A."/>
            <person name="Magee P.T."/>
        </authorList>
    </citation>
    <scope>GENOME REANNOTATION</scope>
    <source>
        <strain>SC5314 / ATCC MYA-2876</strain>
    </source>
</reference>
<reference key="3">
    <citation type="journal article" date="2013" name="Genome Biol.">
        <title>Assembly of a phased diploid Candida albicans genome facilitates allele-specific measurements and provides a simple model for repeat and indel structure.</title>
        <authorList>
            <person name="Muzzey D."/>
            <person name="Schwartz K."/>
            <person name="Weissman J.S."/>
            <person name="Sherlock G."/>
        </authorList>
    </citation>
    <scope>NUCLEOTIDE SEQUENCE [LARGE SCALE GENOMIC DNA]</scope>
    <scope>GENOME REANNOTATION</scope>
    <source>
        <strain>SC5314 / ATCC MYA-2876</strain>
    </source>
</reference>
<reference key="4">
    <citation type="journal article" date="2003" name="Yeast">
        <title>Genome-wide identification of fungal GPI proteins.</title>
        <authorList>
            <person name="De Groot P.W."/>
            <person name="Hellingwerf K.J."/>
            <person name="Klis F.M."/>
        </authorList>
    </citation>
    <scope>PREDICTION OF GPI-ANCHOR</scope>
</reference>
<reference key="5">
    <citation type="journal article" date="2013" name="Antimicrob. Agents Chemother.">
        <title>Milbemycins: more than efflux inhibitors for fungal pathogens.</title>
        <authorList>
            <person name="Silva L.V."/>
            <person name="Sanguinetti M."/>
            <person name="Vandeputte P."/>
            <person name="Torelli R."/>
            <person name="Rochat B."/>
            <person name="Sanglard D."/>
        </authorList>
    </citation>
    <scope>INDUCTION</scope>
</reference>
<organism>
    <name type="scientific">Candida albicans (strain SC5314 / ATCC MYA-2876)</name>
    <name type="common">Yeast</name>
    <dbReference type="NCBI Taxonomy" id="237561"/>
    <lineage>
        <taxon>Eukaryota</taxon>
        <taxon>Fungi</taxon>
        <taxon>Dikarya</taxon>
        <taxon>Ascomycota</taxon>
        <taxon>Saccharomycotina</taxon>
        <taxon>Pichiomycetes</taxon>
        <taxon>Debaryomycetaceae</taxon>
        <taxon>Candida/Lodderomyces clade</taxon>
        <taxon>Candida</taxon>
    </lineage>
</organism>
<comment type="subcellular location">
    <subcellularLocation>
        <location evidence="5">Cell membrane</location>
        <topology evidence="5">Lipid-anchor</topology>
        <topology evidence="5">GPI-anchor</topology>
    </subcellularLocation>
</comment>
<comment type="induction">
    <text evidence="4">Up-regulated upon milbemycins A3 oxim derivative (A3Ox) treatment.</text>
</comment>
<accession>Q5AJK6</accession>
<accession>A0A1D8PJ58</accession>
<evidence type="ECO:0000255" key="1"/>
<evidence type="ECO:0000255" key="2">
    <source>
        <dbReference type="PROSITE-ProRule" id="PRU00498"/>
    </source>
</evidence>
<evidence type="ECO:0000256" key="3">
    <source>
        <dbReference type="SAM" id="MobiDB-lite"/>
    </source>
</evidence>
<evidence type="ECO:0000269" key="4">
    <source>
    </source>
</evidence>
<evidence type="ECO:0000305" key="5"/>
<gene>
    <name type="primary">PGA44</name>
    <name type="ordered locus">CAALFM_C301370CA</name>
    <name type="ORF">CaO19.1714</name>
</gene>
<protein>
    <recommendedName>
        <fullName>Predicted GPI-anchored protein 44</fullName>
    </recommendedName>
</protein>